<keyword id="KW-1185">Reference proteome</keyword>
<dbReference type="EMBL" id="AE000657">
    <property type="protein sequence ID" value="AAC07395.1"/>
    <property type="molecule type" value="Genomic_DNA"/>
</dbReference>
<dbReference type="PIR" id="E70425">
    <property type="entry name" value="E70425"/>
</dbReference>
<dbReference type="RefSeq" id="NP_213996.1">
    <property type="nucleotide sequence ID" value="NC_000918.1"/>
</dbReference>
<dbReference type="RefSeq" id="WP_010880934.1">
    <property type="nucleotide sequence ID" value="NC_000918.1"/>
</dbReference>
<dbReference type="SMR" id="O67431"/>
<dbReference type="STRING" id="224324.aq_1444"/>
<dbReference type="EnsemblBacteria" id="AAC07395">
    <property type="protein sequence ID" value="AAC07395"/>
    <property type="gene ID" value="aq_1444"/>
</dbReference>
<dbReference type="KEGG" id="aae:aq_1444"/>
<dbReference type="PATRIC" id="fig|224324.8.peg.1126"/>
<dbReference type="eggNOG" id="COG2078">
    <property type="taxonomic scope" value="Bacteria"/>
</dbReference>
<dbReference type="HOGENOM" id="CLU_095686_1_1_0"/>
<dbReference type="InParanoid" id="O67431"/>
<dbReference type="OrthoDB" id="159752at2"/>
<dbReference type="Proteomes" id="UP000000798">
    <property type="component" value="Chromosome"/>
</dbReference>
<dbReference type="Gene3D" id="3.30.700.20">
    <property type="entry name" value="Hypothetical protein ph0010, domain 1"/>
    <property type="match status" value="1"/>
</dbReference>
<dbReference type="Gene3D" id="3.30.1490.150">
    <property type="entry name" value="Hypothetical protein ph0010, domain 2"/>
    <property type="match status" value="1"/>
</dbReference>
<dbReference type="HAMAP" id="MF_00645">
    <property type="entry name" value="AMMECR1"/>
    <property type="match status" value="1"/>
</dbReference>
<dbReference type="InterPro" id="IPR023473">
    <property type="entry name" value="AMMECR1"/>
</dbReference>
<dbReference type="InterPro" id="IPR036071">
    <property type="entry name" value="AMMECR1_dom_sf"/>
</dbReference>
<dbReference type="InterPro" id="IPR002733">
    <property type="entry name" value="AMMECR1_domain"/>
</dbReference>
<dbReference type="InterPro" id="IPR027485">
    <property type="entry name" value="AMMECR1_N"/>
</dbReference>
<dbReference type="InterPro" id="IPR027623">
    <property type="entry name" value="AmmeMemoSam_A"/>
</dbReference>
<dbReference type="InterPro" id="IPR023472">
    <property type="entry name" value="Uncharacterised_MJ0810"/>
</dbReference>
<dbReference type="NCBIfam" id="TIGR04335">
    <property type="entry name" value="AmmeMemoSam_A"/>
    <property type="match status" value="1"/>
</dbReference>
<dbReference type="NCBIfam" id="TIGR00296">
    <property type="entry name" value="TIGR00296 family protein"/>
    <property type="match status" value="1"/>
</dbReference>
<dbReference type="PANTHER" id="PTHR13016:SF0">
    <property type="entry name" value="AMME SYNDROME CANDIDATE GENE 1 PROTEIN"/>
    <property type="match status" value="1"/>
</dbReference>
<dbReference type="PANTHER" id="PTHR13016">
    <property type="entry name" value="AMMECR1 HOMOLOG"/>
    <property type="match status" value="1"/>
</dbReference>
<dbReference type="Pfam" id="PF01871">
    <property type="entry name" value="AMMECR1"/>
    <property type="match status" value="1"/>
</dbReference>
<dbReference type="SUPFAM" id="SSF143447">
    <property type="entry name" value="AMMECR1-like"/>
    <property type="match status" value="1"/>
</dbReference>
<dbReference type="PROSITE" id="PS51112">
    <property type="entry name" value="AMMECR1"/>
    <property type="match status" value="1"/>
</dbReference>
<evidence type="ECO:0000255" key="1">
    <source>
        <dbReference type="HAMAP-Rule" id="MF_00645"/>
    </source>
</evidence>
<protein>
    <recommendedName>
        <fullName evidence="1">Protein aq_1444</fullName>
    </recommendedName>
</protein>
<accession>O67431</accession>
<organism>
    <name type="scientific">Aquifex aeolicus (strain VF5)</name>
    <dbReference type="NCBI Taxonomy" id="224324"/>
    <lineage>
        <taxon>Bacteria</taxon>
        <taxon>Pseudomonadati</taxon>
        <taxon>Aquificota</taxon>
        <taxon>Aquificia</taxon>
        <taxon>Aquificales</taxon>
        <taxon>Aquificaceae</taxon>
        <taxon>Aquifex</taxon>
    </lineage>
</organism>
<feature type="chain" id="PRO_0000142392" description="Protein aq_1444">
    <location>
        <begin position="1"/>
        <end position="195"/>
    </location>
</feature>
<feature type="domain" description="AMMECR1" evidence="1">
    <location>
        <begin position="1"/>
        <end position="191"/>
    </location>
</feature>
<name>Y1444_AQUAE</name>
<reference key="1">
    <citation type="journal article" date="1998" name="Nature">
        <title>The complete genome of the hyperthermophilic bacterium Aquifex aeolicus.</title>
        <authorList>
            <person name="Deckert G."/>
            <person name="Warren P.V."/>
            <person name="Gaasterland T."/>
            <person name="Young W.G."/>
            <person name="Lenox A.L."/>
            <person name="Graham D.E."/>
            <person name="Overbeek R."/>
            <person name="Snead M.A."/>
            <person name="Keller M."/>
            <person name="Aujay M."/>
            <person name="Huber R."/>
            <person name="Feldman R.A."/>
            <person name="Short J.M."/>
            <person name="Olsen G.J."/>
            <person name="Swanson R.V."/>
        </authorList>
    </citation>
    <scope>NUCLEOTIDE SEQUENCE [LARGE SCALE GENOMIC DNA]</scope>
    <source>
        <strain>VF5</strain>
    </source>
</reference>
<proteinExistence type="inferred from homology"/>
<gene>
    <name type="ordered locus">aq_1444</name>
</gene>
<sequence>MDIRELVHLGRYAVWNAFEGKEIKVPEALKEKYSRNMGVFTTLKTYPEHNLRGCIGVPLPVYPLWYATVYSSLQAAFQDPRFYPLKKEEFDKVLWEITLLTPPEELKVPKEELPEQIEIGKHGLIIEKGEQKGLLLPQVPVEYGWSPVEFLEYTCLKAGLPKDCWKDKETKVYVFSGEVYQEKEPFGEVERVNLK</sequence>